<keyword id="KW-0007">Acetylation</keyword>
<keyword id="KW-0012">Acyltransferase</keyword>
<keyword id="KW-0153">Cholesterol metabolism</keyword>
<keyword id="KW-1015">Disulfide bond</keyword>
<keyword id="KW-0256">Endoplasmic reticulum</keyword>
<keyword id="KW-0443">Lipid metabolism</keyword>
<keyword id="KW-0472">Membrane</keyword>
<keyword id="KW-0597">Phosphoprotein</keyword>
<keyword id="KW-0753">Steroid metabolism</keyword>
<keyword id="KW-1207">Sterol metabolism</keyword>
<keyword id="KW-0808">Transferase</keyword>
<keyword id="KW-0812">Transmembrane</keyword>
<keyword id="KW-1133">Transmembrane helix</keyword>
<evidence type="ECO:0000250" key="1">
    <source>
        <dbReference type="UniProtKB" id="P35610"/>
    </source>
</evidence>
<evidence type="ECO:0000256" key="2">
    <source>
        <dbReference type="SAM" id="MobiDB-lite"/>
    </source>
</evidence>
<evidence type="ECO:0000305" key="3"/>
<dbReference type="EC" id="2.3.1.26" evidence="1"/>
<dbReference type="EMBL" id="U47320">
    <property type="protein sequence ID" value="AAC52670.1"/>
    <property type="molecule type" value="mRNA"/>
</dbReference>
<dbReference type="RefSeq" id="NP_001233679.1">
    <property type="nucleotide sequence ID" value="NM_001246750.1"/>
</dbReference>
<dbReference type="SMR" id="Q60457"/>
<dbReference type="BindingDB" id="Q60457"/>
<dbReference type="ChEMBL" id="CHEMBL1075066"/>
<dbReference type="PaxDb" id="10029-NP_001233679.1"/>
<dbReference type="GeneID" id="100689317"/>
<dbReference type="KEGG" id="cge:100689317"/>
<dbReference type="CTD" id="6646"/>
<dbReference type="eggNOG" id="KOG0380">
    <property type="taxonomic scope" value="Eukaryota"/>
</dbReference>
<dbReference type="OrthoDB" id="10039049at2759"/>
<dbReference type="PRO" id="PR:Q60457"/>
<dbReference type="Proteomes" id="UP000694386">
    <property type="component" value="Unplaced"/>
</dbReference>
<dbReference type="Proteomes" id="UP001108280">
    <property type="component" value="Chromosome 5"/>
</dbReference>
<dbReference type="GO" id="GO:0005789">
    <property type="term" value="C:endoplasmic reticulum membrane"/>
    <property type="evidence" value="ECO:0007669"/>
    <property type="project" value="UniProtKB-SubCell"/>
</dbReference>
<dbReference type="GO" id="GO:0015485">
    <property type="term" value="F:cholesterol binding"/>
    <property type="evidence" value="ECO:0000250"/>
    <property type="project" value="UniProtKB"/>
</dbReference>
<dbReference type="GO" id="GO:0034736">
    <property type="term" value="F:cholesterol O-acyltransferase activity"/>
    <property type="evidence" value="ECO:0000250"/>
    <property type="project" value="UniProtKB"/>
</dbReference>
<dbReference type="GO" id="GO:0000062">
    <property type="term" value="F:fatty-acyl-CoA binding"/>
    <property type="evidence" value="ECO:0007669"/>
    <property type="project" value="TreeGrafter"/>
</dbReference>
<dbReference type="GO" id="GO:0004772">
    <property type="term" value="F:sterol O-acyltransferase activity"/>
    <property type="evidence" value="ECO:0000250"/>
    <property type="project" value="UniProtKB"/>
</dbReference>
<dbReference type="GO" id="GO:0033344">
    <property type="term" value="P:cholesterol efflux"/>
    <property type="evidence" value="ECO:0007669"/>
    <property type="project" value="TreeGrafter"/>
</dbReference>
<dbReference type="GO" id="GO:0042632">
    <property type="term" value="P:cholesterol homeostasis"/>
    <property type="evidence" value="ECO:0000250"/>
    <property type="project" value="UniProtKB"/>
</dbReference>
<dbReference type="GO" id="GO:0008203">
    <property type="term" value="P:cholesterol metabolic process"/>
    <property type="evidence" value="ECO:0000250"/>
    <property type="project" value="UniProtKB"/>
</dbReference>
<dbReference type="InterPro" id="IPR004299">
    <property type="entry name" value="MBOAT_fam"/>
</dbReference>
<dbReference type="InterPro" id="IPR014371">
    <property type="entry name" value="Oat_ACAT_DAG_ARE"/>
</dbReference>
<dbReference type="InterPro" id="IPR030687">
    <property type="entry name" value="Sterol_acyltranf_meta"/>
</dbReference>
<dbReference type="PANTHER" id="PTHR10408">
    <property type="entry name" value="STEROL O-ACYLTRANSFERASE"/>
    <property type="match status" value="1"/>
</dbReference>
<dbReference type="PANTHER" id="PTHR10408:SF6">
    <property type="entry name" value="STEROL O-ACYLTRANSFERASE 1"/>
    <property type="match status" value="1"/>
</dbReference>
<dbReference type="Pfam" id="PF03062">
    <property type="entry name" value="MBOAT"/>
    <property type="match status" value="1"/>
</dbReference>
<dbReference type="PIRSF" id="PIRSF000439">
    <property type="entry name" value="Oat_ACAT_DAG_ARE"/>
    <property type="match status" value="1"/>
</dbReference>
<dbReference type="PIRSF" id="PIRSF500230">
    <property type="entry name" value="Sterol_acyltranf_ACAT"/>
    <property type="match status" value="1"/>
</dbReference>
<comment type="function">
    <text evidence="1">Catalyzes the formation of fatty acid-cholesterol esters, which are less soluble in membranes than cholesterol. Plays a role in lipoprotein assembly and dietary cholesterol absorption. Preferentially utilizes oleoyl-CoA ((9Z)-octadecenoyl-CoA) as a substrate: shows a higher activity towards an acyl-CoA substrate with a double bond at the delta-9 position (9Z) than towards saturated acyl-CoA or an unsaturated acyl-CoA with a double bond at the delta-7 (7Z) or delta-11 (11Z) positions.</text>
</comment>
<comment type="catalytic activity">
    <reaction evidence="1">
        <text>a sterol + a long-chain fatty acyl-CoA = a long-chain 3-hydroxysterol ester + CoA</text>
        <dbReference type="Rhea" id="RHEA:59816"/>
        <dbReference type="ChEBI" id="CHEBI:15889"/>
        <dbReference type="ChEBI" id="CHEBI:57287"/>
        <dbReference type="ChEBI" id="CHEBI:83139"/>
        <dbReference type="ChEBI" id="CHEBI:232093"/>
        <dbReference type="EC" id="2.3.1.26"/>
    </reaction>
    <physiologicalReaction direction="left-to-right" evidence="1">
        <dbReference type="Rhea" id="RHEA:59817"/>
    </physiologicalReaction>
</comment>
<comment type="catalytic activity">
    <reaction evidence="1">
        <text>cholesterol + an acyl-CoA = a cholesterol ester + CoA</text>
        <dbReference type="Rhea" id="RHEA:17729"/>
        <dbReference type="ChEBI" id="CHEBI:16113"/>
        <dbReference type="ChEBI" id="CHEBI:17002"/>
        <dbReference type="ChEBI" id="CHEBI:57287"/>
        <dbReference type="ChEBI" id="CHEBI:58342"/>
    </reaction>
    <physiologicalReaction direction="left-to-right" evidence="1">
        <dbReference type="Rhea" id="RHEA:17730"/>
    </physiologicalReaction>
</comment>
<comment type="catalytic activity">
    <reaction evidence="1">
        <text>cholesterol + (9Z)-octadecenoyl-CoA = cholesteryl (9Z-octadecenoate) + CoA</text>
        <dbReference type="Rhea" id="RHEA:41436"/>
        <dbReference type="ChEBI" id="CHEBI:16113"/>
        <dbReference type="ChEBI" id="CHEBI:46898"/>
        <dbReference type="ChEBI" id="CHEBI:57287"/>
        <dbReference type="ChEBI" id="CHEBI:57387"/>
    </reaction>
    <physiologicalReaction direction="left-to-right" evidence="1">
        <dbReference type="Rhea" id="RHEA:41437"/>
    </physiologicalReaction>
</comment>
<comment type="catalytic activity">
    <reaction evidence="1">
        <text>cholesterol + hexadecanoyl-CoA = cholesteryl hexadecanoate + CoA</text>
        <dbReference type="Rhea" id="RHEA:42792"/>
        <dbReference type="ChEBI" id="CHEBI:3663"/>
        <dbReference type="ChEBI" id="CHEBI:16113"/>
        <dbReference type="ChEBI" id="CHEBI:57287"/>
        <dbReference type="ChEBI" id="CHEBI:57379"/>
    </reaction>
    <physiologicalReaction direction="left-to-right" evidence="1">
        <dbReference type="Rhea" id="RHEA:42793"/>
    </physiologicalReaction>
</comment>
<comment type="catalytic activity">
    <reaction evidence="1">
        <text>octadecanoyl-CoA + cholesterol = cholesteryl octadecanoate + CoA</text>
        <dbReference type="Rhea" id="RHEA:42812"/>
        <dbReference type="ChEBI" id="CHEBI:16113"/>
        <dbReference type="ChEBI" id="CHEBI:57287"/>
        <dbReference type="ChEBI" id="CHEBI:57394"/>
        <dbReference type="ChEBI" id="CHEBI:82750"/>
    </reaction>
    <physiologicalReaction direction="left-to-right" evidence="1">
        <dbReference type="Rhea" id="RHEA:42813"/>
    </physiologicalReaction>
</comment>
<comment type="catalytic activity">
    <reaction evidence="1">
        <text>(9Z,12Z)-octadecadienoyl-CoA + cholesterol = cholesteryl (9Z,12Z)-octadecadienoate + CoA</text>
        <dbReference type="Rhea" id="RHEA:42796"/>
        <dbReference type="ChEBI" id="CHEBI:16113"/>
        <dbReference type="ChEBI" id="CHEBI:41509"/>
        <dbReference type="ChEBI" id="CHEBI:57287"/>
        <dbReference type="ChEBI" id="CHEBI:57383"/>
    </reaction>
    <physiologicalReaction direction="left-to-right" evidence="1">
        <dbReference type="Rhea" id="RHEA:42797"/>
    </physiologicalReaction>
</comment>
<comment type="catalytic activity">
    <reaction evidence="1">
        <text>(5Z,8Z,11Z,14Z)-eicosatetraenoyl-CoA + cholesterol = cholesteryl (5Z,8Z,11Z,14Z)-eicosatetraenoate + CoA</text>
        <dbReference type="Rhea" id="RHEA:42816"/>
        <dbReference type="ChEBI" id="CHEBI:16113"/>
        <dbReference type="ChEBI" id="CHEBI:57287"/>
        <dbReference type="ChEBI" id="CHEBI:57368"/>
        <dbReference type="ChEBI" id="CHEBI:82751"/>
    </reaction>
    <physiologicalReaction direction="left-to-right" evidence="1">
        <dbReference type="Rhea" id="RHEA:42817"/>
    </physiologicalReaction>
</comment>
<comment type="catalytic activity">
    <reaction evidence="1">
        <text>(9Z)-hexadecenoyl-CoA + cholesterol = cholesteryl (9Z)-hexadecenoate + CoA</text>
        <dbReference type="Rhea" id="RHEA:64320"/>
        <dbReference type="ChEBI" id="CHEBI:16113"/>
        <dbReference type="ChEBI" id="CHEBI:57287"/>
        <dbReference type="ChEBI" id="CHEBI:61540"/>
        <dbReference type="ChEBI" id="CHEBI:84323"/>
    </reaction>
    <physiologicalReaction direction="left-to-right" evidence="1">
        <dbReference type="Rhea" id="RHEA:64321"/>
    </physiologicalReaction>
</comment>
<comment type="catalytic activity">
    <reaction evidence="1">
        <text>(11Z)-octadecenoyl-CoA + cholesterol = cholesteryl (11Z)-octadecenoate + CoA</text>
        <dbReference type="Rhea" id="RHEA:64324"/>
        <dbReference type="ChEBI" id="CHEBI:16113"/>
        <dbReference type="ChEBI" id="CHEBI:57287"/>
        <dbReference type="ChEBI" id="CHEBI:75121"/>
        <dbReference type="ChEBI" id="CHEBI:88768"/>
    </reaction>
    <physiologicalReaction direction="left-to-right" evidence="1">
        <dbReference type="Rhea" id="RHEA:64325"/>
    </physiologicalReaction>
</comment>
<comment type="catalytic activity">
    <reaction evidence="1">
        <text>(7Z)-octadecenoyl-CoA + cholesterol = cholesteryl (7Z)-octadecenoate + CoA</text>
        <dbReference type="Rhea" id="RHEA:64328"/>
        <dbReference type="ChEBI" id="CHEBI:16113"/>
        <dbReference type="ChEBI" id="CHEBI:57287"/>
        <dbReference type="ChEBI" id="CHEBI:152049"/>
        <dbReference type="ChEBI" id="CHEBI:152050"/>
    </reaction>
    <physiologicalReaction direction="left-to-right" evidence="1">
        <dbReference type="Rhea" id="RHEA:64329"/>
    </physiologicalReaction>
</comment>
<comment type="subunit">
    <text evidence="1">May form homo- or heterodimers. Interacts with UBIAD1.</text>
</comment>
<comment type="subcellular location">
    <subcellularLocation>
        <location evidence="1">Endoplasmic reticulum membrane</location>
        <topology evidence="1">Multi-pass membrane protein</topology>
    </subcellularLocation>
</comment>
<comment type="domain">
    <text evidence="1">Each protomer consists of 9 transmembrane segments, which enclose a cytosolic tunnel and a transmembrane tunnel that converge at the predicted catalytic site: acyl-CoA enters the active site through the cytosolic tunnel, whereas cholesterol enters from the side through the transmembrane tunnel.</text>
</comment>
<comment type="similarity">
    <text evidence="3">Belongs to the membrane-bound acyltransferase family. Sterol o-acyltransferase subfamily.</text>
</comment>
<gene>
    <name type="primary">SOAT1</name>
    <name type="synonym">ACAT</name>
    <name type="synonym">ACAT1</name>
</gene>
<reference key="1">
    <citation type="journal article" date="1996" name="J. Biol. Chem.">
        <title>Complementation of mutation in acyl-CoA:cholesterol acyltransferase (ACAT) fails to restore sterol regulation in ACAT-defective sterol-resistant hamster cells.</title>
        <authorList>
            <person name="Cao G."/>
            <person name="Goldstein J.L."/>
            <person name="Brown M.S."/>
        </authorList>
    </citation>
    <scope>NUCLEOTIDE SEQUENCE [MRNA]</scope>
</reference>
<feature type="chain" id="PRO_0000207639" description="Sterol O-acyltransferase 1">
    <location>
        <begin position="1"/>
        <end position="546"/>
    </location>
</feature>
<feature type="topological domain" description="Cytoplasmic" evidence="3">
    <location>
        <begin position="1"/>
        <end position="134"/>
    </location>
</feature>
<feature type="transmembrane region" description="Helical; Name=1" evidence="1">
    <location>
        <begin position="135"/>
        <end position="156"/>
    </location>
</feature>
<feature type="topological domain" description="Lumenal" evidence="3">
    <location>
        <begin position="157"/>
        <end position="176"/>
    </location>
</feature>
<feature type="transmembrane region" description="Helical; Name=2" evidence="1">
    <location>
        <begin position="177"/>
        <end position="202"/>
    </location>
</feature>
<feature type="topological domain" description="Cytoplasmic" evidence="3">
    <location>
        <begin position="203"/>
        <end position="214"/>
    </location>
</feature>
<feature type="transmembrane region" description="Helical; Name=3" evidence="1">
    <location>
        <begin position="215"/>
        <end position="240"/>
    </location>
</feature>
<feature type="topological domain" description="Lumenal" evidence="3">
    <location>
        <begin position="241"/>
        <end position="248"/>
    </location>
</feature>
<feature type="transmembrane region" description="Helical; Name=4" evidence="1">
    <location>
        <begin position="249"/>
        <end position="272"/>
    </location>
</feature>
<feature type="topological domain" description="Cytoplasmic" evidence="3">
    <location>
        <begin position="273"/>
        <end position="315"/>
    </location>
</feature>
<feature type="transmembrane region" description="Helical; Name=5" evidence="1">
    <location>
        <begin position="316"/>
        <end position="348"/>
    </location>
</feature>
<feature type="topological domain" description="Lumenal" evidence="3">
    <location>
        <begin position="349"/>
        <end position="365"/>
    </location>
</feature>
<feature type="transmembrane region" description="Helical; Name=6" evidence="1">
    <location>
        <begin position="366"/>
        <end position="391"/>
    </location>
</feature>
<feature type="topological domain" description="Cytoplasmic" evidence="3">
    <location>
        <begin position="392"/>
        <end position="439"/>
    </location>
</feature>
<feature type="transmembrane region" description="Helical; Name=7" evidence="1">
    <location>
        <begin position="440"/>
        <end position="464"/>
    </location>
</feature>
<feature type="topological domain" description="Lumenal" evidence="3">
    <location>
        <begin position="465"/>
        <end position="470"/>
    </location>
</feature>
<feature type="transmembrane region" description="Helical; Name=8" evidence="1">
    <location>
        <begin position="471"/>
        <end position="486"/>
    </location>
</feature>
<feature type="topological domain" description="Cytoplasmic" evidence="3">
    <location>
        <begin position="487"/>
        <end position="492"/>
    </location>
</feature>
<feature type="transmembrane region" description="Helical; Name=9" evidence="1">
    <location>
        <begin position="493"/>
        <end position="524"/>
    </location>
</feature>
<feature type="topological domain" description="Lumenal" evidence="3">
    <location>
        <begin position="525"/>
        <end position="546"/>
    </location>
</feature>
<feature type="region of interest" description="Disordered" evidence="2">
    <location>
        <begin position="1"/>
        <end position="37"/>
    </location>
</feature>
<feature type="short sequence motif" description="FYXDWWN motif" evidence="1">
    <location>
        <begin position="399"/>
        <end position="405"/>
    </location>
</feature>
<feature type="compositionally biased region" description="Polar residues" evidence="2">
    <location>
        <begin position="27"/>
        <end position="37"/>
    </location>
</feature>
<feature type="active site" evidence="1">
    <location>
        <position position="456"/>
    </location>
</feature>
<feature type="binding site" evidence="1">
    <location>
        <position position="133"/>
    </location>
    <ligand>
        <name>cholesterol</name>
        <dbReference type="ChEBI" id="CHEBI:16113"/>
    </ligand>
</feature>
<feature type="binding site" evidence="1">
    <location>
        <position position="411"/>
    </location>
    <ligand>
        <name>an acyl-CoA</name>
        <dbReference type="ChEBI" id="CHEBI:58342"/>
    </ligand>
</feature>
<feature type="binding site" evidence="1">
    <location>
        <position position="414"/>
    </location>
    <ligand>
        <name>an acyl-CoA</name>
        <dbReference type="ChEBI" id="CHEBI:58342"/>
    </ligand>
</feature>
<feature type="binding site" evidence="1">
    <location>
        <position position="417"/>
    </location>
    <ligand>
        <name>an acyl-CoA</name>
        <dbReference type="ChEBI" id="CHEBI:58342"/>
    </ligand>
</feature>
<feature type="binding site" evidence="1">
    <location>
        <position position="421"/>
    </location>
    <ligand>
        <name>an acyl-CoA</name>
        <dbReference type="ChEBI" id="CHEBI:58342"/>
    </ligand>
</feature>
<feature type="binding site" evidence="1">
    <location>
        <position position="429"/>
    </location>
    <ligand>
        <name>an acyl-CoA</name>
        <dbReference type="ChEBI" id="CHEBI:58342"/>
    </ligand>
</feature>
<feature type="binding site" evidence="1">
    <location>
        <position position="441"/>
    </location>
    <ligand>
        <name>an acyl-CoA</name>
        <dbReference type="ChEBI" id="CHEBI:58342"/>
    </ligand>
</feature>
<feature type="binding site" evidence="1">
    <location>
        <position position="452"/>
    </location>
    <ligand>
        <name>an acyl-CoA</name>
        <dbReference type="ChEBI" id="CHEBI:58342"/>
    </ligand>
</feature>
<feature type="modified residue" description="N-acetylmethionine" evidence="1">
    <location>
        <position position="1"/>
    </location>
</feature>
<feature type="modified residue" description="Phosphoserine" evidence="1">
    <location>
        <position position="8"/>
    </location>
</feature>
<feature type="disulfide bond" evidence="1">
    <location>
        <begin position="524"/>
        <end position="542"/>
    </location>
</feature>
<sequence>MVGEEKMSLRNRLSKSGENPEQDEAQRSVSDTQSNGRITMKQLIAKKRQLAAEAEELKPLFLKEVGCHFDDFVTNLIEKSASLDNGGCALTTFSILEEMKNNHRAKDLRAPPEKGKIFISRRSLLDELFEVDHIRTIYHMFIGLLILFILSTLVVDYIDEGRLVLEFNLLGYAFGKLPTVIWTWWAMFLSTLSIPYFLFQRWAHGYSKTSHPLIYSLSHGFFFLVFQLGILGFVPTYVVLAYTLPPASRFIVILEQIRMVMKAHSFVRENVPRVLNAAKEKSSTVPVPTVNQYLYFLFAPTLIYRDSYPRTPTVRWGYVAVQFLQVFGCLFYVYYIFERLCAPLFRNIKQEPFSARVLVLCVFNSILPGVLMLFLTFFAFLHCWLNAFAEMLRFGDRMFYKDWWNSTSYSNYYRTWNVVVHDWLYYYAYKDLLWFFSKRFKSAAMLAVFALSAVVHEYALAVCLSYFYPVLFVLFMFFGMAFNFIVNDSRKRPIWNIMVWASLFLGHGVILCFYSQEWYARQHCPLKNPTFLDYVRPRSWTCQYVF</sequence>
<organism>
    <name type="scientific">Cricetulus griseus</name>
    <name type="common">Chinese hamster</name>
    <name type="synonym">Cricetulus barabensis griseus</name>
    <dbReference type="NCBI Taxonomy" id="10029"/>
    <lineage>
        <taxon>Eukaryota</taxon>
        <taxon>Metazoa</taxon>
        <taxon>Chordata</taxon>
        <taxon>Craniata</taxon>
        <taxon>Vertebrata</taxon>
        <taxon>Euteleostomi</taxon>
        <taxon>Mammalia</taxon>
        <taxon>Eutheria</taxon>
        <taxon>Euarchontoglires</taxon>
        <taxon>Glires</taxon>
        <taxon>Rodentia</taxon>
        <taxon>Myomorpha</taxon>
        <taxon>Muroidea</taxon>
        <taxon>Cricetidae</taxon>
        <taxon>Cricetinae</taxon>
        <taxon>Cricetulus</taxon>
    </lineage>
</organism>
<accession>Q60457</accession>
<name>SOAT1_CRIGR</name>
<proteinExistence type="evidence at transcript level"/>
<protein>
    <recommendedName>
        <fullName>Sterol O-acyltransferase 1</fullName>
        <ecNumber evidence="1">2.3.1.26</ecNumber>
    </recommendedName>
    <alternativeName>
        <fullName>Acyl-coenzyme A:cholesterol acyltransferase 1</fullName>
        <shortName>ACAT-1</shortName>
    </alternativeName>
    <alternativeName>
        <fullName>Cholesterol acyltransferase 1</fullName>
    </alternativeName>
</protein>